<protein>
    <recommendedName>
        <fullName evidence="1">NH(3)-dependent NAD(+) synthetase</fullName>
        <ecNumber evidence="1">6.3.1.5</ecNumber>
    </recommendedName>
</protein>
<keyword id="KW-0067">ATP-binding</keyword>
<keyword id="KW-0436">Ligase</keyword>
<keyword id="KW-0460">Magnesium</keyword>
<keyword id="KW-0479">Metal-binding</keyword>
<keyword id="KW-0520">NAD</keyword>
<keyword id="KW-0547">Nucleotide-binding</keyword>
<keyword id="KW-1185">Reference proteome</keyword>
<proteinExistence type="inferred from homology"/>
<reference key="1">
    <citation type="journal article" date="2009" name="BMC Genomics">
        <title>Evidence for niche adaptation in the genome of the bovine pathogen Streptococcus uberis.</title>
        <authorList>
            <person name="Ward P.N."/>
            <person name="Holden M.T.G."/>
            <person name="Leigh J.A."/>
            <person name="Lennard N."/>
            <person name="Bignell A."/>
            <person name="Barron A."/>
            <person name="Clark L."/>
            <person name="Quail M.A."/>
            <person name="Woodward J."/>
            <person name="Barrell B.G."/>
            <person name="Egan S.A."/>
            <person name="Field T.R."/>
            <person name="Maskell D."/>
            <person name="Kehoe M."/>
            <person name="Dowson C.G."/>
            <person name="Chanter N."/>
            <person name="Whatmore A.M."/>
            <person name="Bentley S.D."/>
            <person name="Parkhill J."/>
        </authorList>
    </citation>
    <scope>NUCLEOTIDE SEQUENCE [LARGE SCALE GENOMIC DNA]</scope>
    <source>
        <strain>ATCC BAA-854 / 0140J</strain>
    </source>
</reference>
<sequence length="274" mass="30379">MSLQNDIIKELGVKPTIVPKEEIRRSLDFLKAYLLKHPFLKTLVLGISGGQDSTLAGRLAQLAVEELRQETGDQSYRFIAIRLPYGVQADEADAQKALAFIRPDQTLTINIKAAVDGQVEALKAAGIEITDFNKGNIKARQRMISQYAVAGQTSGAVIGTDHAAENITGFFTKFGDGGADILPLFRLNKRQGKALLREMGADASLYEKVPTADLEENKPGLADEVALGVTYNDIDDYLEGKEISKEAQEKIESWWYKGLHKRHLPITIFDDFWK</sequence>
<gene>
    <name evidence="1" type="primary">nadE</name>
    <name type="ordered locus">SUB1409</name>
</gene>
<comment type="function">
    <text evidence="1">Catalyzes the ATP-dependent amidation of deamido-NAD to form NAD. Uses ammonia as a nitrogen source.</text>
</comment>
<comment type="catalytic activity">
    <reaction evidence="1">
        <text>deamido-NAD(+) + NH4(+) + ATP = AMP + diphosphate + NAD(+) + H(+)</text>
        <dbReference type="Rhea" id="RHEA:21188"/>
        <dbReference type="ChEBI" id="CHEBI:15378"/>
        <dbReference type="ChEBI" id="CHEBI:28938"/>
        <dbReference type="ChEBI" id="CHEBI:30616"/>
        <dbReference type="ChEBI" id="CHEBI:33019"/>
        <dbReference type="ChEBI" id="CHEBI:57540"/>
        <dbReference type="ChEBI" id="CHEBI:58437"/>
        <dbReference type="ChEBI" id="CHEBI:456215"/>
        <dbReference type="EC" id="6.3.1.5"/>
    </reaction>
</comment>
<comment type="pathway">
    <text evidence="1">Cofactor biosynthesis; NAD(+) biosynthesis; NAD(+) from deamido-NAD(+) (ammonia route): step 1/1.</text>
</comment>
<comment type="subunit">
    <text evidence="1">Homodimer.</text>
</comment>
<comment type="similarity">
    <text evidence="1">Belongs to the NAD synthetase family.</text>
</comment>
<dbReference type="EC" id="6.3.1.5" evidence="1"/>
<dbReference type="EMBL" id="AM946015">
    <property type="protein sequence ID" value="CAR43052.1"/>
    <property type="molecule type" value="Genomic_DNA"/>
</dbReference>
<dbReference type="RefSeq" id="WP_015911729.1">
    <property type="nucleotide sequence ID" value="NC_012004.1"/>
</dbReference>
<dbReference type="SMR" id="B9DV66"/>
<dbReference type="STRING" id="218495.SUB1409"/>
<dbReference type="KEGG" id="sub:SUB1409"/>
<dbReference type="eggNOG" id="COG0171">
    <property type="taxonomic scope" value="Bacteria"/>
</dbReference>
<dbReference type="HOGENOM" id="CLU_059327_3_0_9"/>
<dbReference type="OrthoDB" id="9803818at2"/>
<dbReference type="UniPathway" id="UPA00253">
    <property type="reaction ID" value="UER00333"/>
</dbReference>
<dbReference type="Proteomes" id="UP000000449">
    <property type="component" value="Chromosome"/>
</dbReference>
<dbReference type="GO" id="GO:0005737">
    <property type="term" value="C:cytoplasm"/>
    <property type="evidence" value="ECO:0007669"/>
    <property type="project" value="InterPro"/>
</dbReference>
<dbReference type="GO" id="GO:0005524">
    <property type="term" value="F:ATP binding"/>
    <property type="evidence" value="ECO:0007669"/>
    <property type="project" value="UniProtKB-UniRule"/>
</dbReference>
<dbReference type="GO" id="GO:0004359">
    <property type="term" value="F:glutaminase activity"/>
    <property type="evidence" value="ECO:0007669"/>
    <property type="project" value="InterPro"/>
</dbReference>
<dbReference type="GO" id="GO:0046872">
    <property type="term" value="F:metal ion binding"/>
    <property type="evidence" value="ECO:0007669"/>
    <property type="project" value="UniProtKB-KW"/>
</dbReference>
<dbReference type="GO" id="GO:0003952">
    <property type="term" value="F:NAD+ synthase (glutamine-hydrolyzing) activity"/>
    <property type="evidence" value="ECO:0007669"/>
    <property type="project" value="InterPro"/>
</dbReference>
<dbReference type="GO" id="GO:0008795">
    <property type="term" value="F:NAD+ synthase activity"/>
    <property type="evidence" value="ECO:0007669"/>
    <property type="project" value="UniProtKB-UniRule"/>
</dbReference>
<dbReference type="GO" id="GO:0009435">
    <property type="term" value="P:NAD biosynthetic process"/>
    <property type="evidence" value="ECO:0007669"/>
    <property type="project" value="UniProtKB-UniRule"/>
</dbReference>
<dbReference type="CDD" id="cd00553">
    <property type="entry name" value="NAD_synthase"/>
    <property type="match status" value="1"/>
</dbReference>
<dbReference type="FunFam" id="3.40.50.620:FF:000015">
    <property type="entry name" value="NH(3)-dependent NAD(+) synthetase"/>
    <property type="match status" value="1"/>
</dbReference>
<dbReference type="Gene3D" id="3.40.50.620">
    <property type="entry name" value="HUPs"/>
    <property type="match status" value="1"/>
</dbReference>
<dbReference type="HAMAP" id="MF_00193">
    <property type="entry name" value="NadE_ammonia_dep"/>
    <property type="match status" value="1"/>
</dbReference>
<dbReference type="InterPro" id="IPR022310">
    <property type="entry name" value="NAD/GMP_synthase"/>
</dbReference>
<dbReference type="InterPro" id="IPR003694">
    <property type="entry name" value="NAD_synthase"/>
</dbReference>
<dbReference type="InterPro" id="IPR022926">
    <property type="entry name" value="NH(3)-dep_NAD(+)_synth"/>
</dbReference>
<dbReference type="InterPro" id="IPR014729">
    <property type="entry name" value="Rossmann-like_a/b/a_fold"/>
</dbReference>
<dbReference type="NCBIfam" id="TIGR00552">
    <property type="entry name" value="nadE"/>
    <property type="match status" value="1"/>
</dbReference>
<dbReference type="NCBIfam" id="NF001979">
    <property type="entry name" value="PRK00768.1"/>
    <property type="match status" value="1"/>
</dbReference>
<dbReference type="PANTHER" id="PTHR23090">
    <property type="entry name" value="NH 3 /GLUTAMINE-DEPENDENT NAD + SYNTHETASE"/>
    <property type="match status" value="1"/>
</dbReference>
<dbReference type="PANTHER" id="PTHR23090:SF7">
    <property type="entry name" value="NH(3)-DEPENDENT NAD(+) SYNTHETASE"/>
    <property type="match status" value="1"/>
</dbReference>
<dbReference type="Pfam" id="PF02540">
    <property type="entry name" value="NAD_synthase"/>
    <property type="match status" value="1"/>
</dbReference>
<dbReference type="SUPFAM" id="SSF52402">
    <property type="entry name" value="Adenine nucleotide alpha hydrolases-like"/>
    <property type="match status" value="1"/>
</dbReference>
<organism>
    <name type="scientific">Streptococcus uberis (strain ATCC BAA-854 / 0140J)</name>
    <dbReference type="NCBI Taxonomy" id="218495"/>
    <lineage>
        <taxon>Bacteria</taxon>
        <taxon>Bacillati</taxon>
        <taxon>Bacillota</taxon>
        <taxon>Bacilli</taxon>
        <taxon>Lactobacillales</taxon>
        <taxon>Streptococcaceae</taxon>
        <taxon>Streptococcus</taxon>
    </lineage>
</organism>
<accession>B9DV66</accession>
<feature type="chain" id="PRO_1000191513" description="NH(3)-dependent NAD(+) synthetase">
    <location>
        <begin position="1"/>
        <end position="274"/>
    </location>
</feature>
<feature type="binding site" evidence="1">
    <location>
        <begin position="46"/>
        <end position="53"/>
    </location>
    <ligand>
        <name>ATP</name>
        <dbReference type="ChEBI" id="CHEBI:30616"/>
    </ligand>
</feature>
<feature type="binding site" evidence="1">
    <location>
        <position position="52"/>
    </location>
    <ligand>
        <name>Mg(2+)</name>
        <dbReference type="ChEBI" id="CHEBI:18420"/>
    </ligand>
</feature>
<feature type="binding site" evidence="1">
    <location>
        <position position="140"/>
    </location>
    <ligand>
        <name>deamido-NAD(+)</name>
        <dbReference type="ChEBI" id="CHEBI:58437"/>
    </ligand>
</feature>
<feature type="binding site" evidence="1">
    <location>
        <position position="160"/>
    </location>
    <ligand>
        <name>ATP</name>
        <dbReference type="ChEBI" id="CHEBI:30616"/>
    </ligand>
</feature>
<feature type="binding site" evidence="1">
    <location>
        <position position="165"/>
    </location>
    <ligand>
        <name>Mg(2+)</name>
        <dbReference type="ChEBI" id="CHEBI:18420"/>
    </ligand>
</feature>
<feature type="binding site" evidence="1">
    <location>
        <position position="173"/>
    </location>
    <ligand>
        <name>deamido-NAD(+)</name>
        <dbReference type="ChEBI" id="CHEBI:58437"/>
    </ligand>
</feature>
<feature type="binding site" evidence="1">
    <location>
        <position position="180"/>
    </location>
    <ligand>
        <name>deamido-NAD(+)</name>
        <dbReference type="ChEBI" id="CHEBI:58437"/>
    </ligand>
</feature>
<feature type="binding site" evidence="1">
    <location>
        <position position="189"/>
    </location>
    <ligand>
        <name>ATP</name>
        <dbReference type="ChEBI" id="CHEBI:30616"/>
    </ligand>
</feature>
<feature type="binding site" evidence="1">
    <location>
        <position position="211"/>
    </location>
    <ligand>
        <name>ATP</name>
        <dbReference type="ChEBI" id="CHEBI:30616"/>
    </ligand>
</feature>
<feature type="binding site" evidence="1">
    <location>
        <begin position="260"/>
        <end position="261"/>
    </location>
    <ligand>
        <name>deamido-NAD(+)</name>
        <dbReference type="ChEBI" id="CHEBI:58437"/>
    </ligand>
</feature>
<evidence type="ECO:0000255" key="1">
    <source>
        <dbReference type="HAMAP-Rule" id="MF_00193"/>
    </source>
</evidence>
<name>NADE_STRU0</name>